<comment type="subcellular location">
    <subcellularLocation>
        <location evidence="3">Membrane</location>
        <topology evidence="3">Single-pass membrane protein</topology>
    </subcellularLocation>
</comment>
<comment type="similarity">
    <text evidence="3">Belongs to the Epstein-Barr virus BDLF3 protein family.</text>
</comment>
<gene>
    <name type="ORF">BDLF3</name>
</gene>
<feature type="signal peptide" evidence="1">
    <location>
        <begin position="1"/>
        <end position="28"/>
    </location>
</feature>
<feature type="chain" id="PRO_0000116186" description="Glycoprotein BDLF3">
    <location>
        <begin position="29"/>
        <end position="234"/>
    </location>
</feature>
<feature type="transmembrane region" description="Helical" evidence="1">
    <location>
        <begin position="187"/>
        <end position="207"/>
    </location>
</feature>
<feature type="region of interest" description="Disordered" evidence="2">
    <location>
        <begin position="29"/>
        <end position="62"/>
    </location>
</feature>
<feature type="region of interest" description="Disordered" evidence="2">
    <location>
        <begin position="116"/>
        <end position="138"/>
    </location>
</feature>
<feature type="glycosylation site" description="N-linked (GlcNAc...) asparagine; by host" evidence="1">
    <location>
        <position position="36"/>
    </location>
</feature>
<feature type="glycosylation site" description="N-linked (GlcNAc...) asparagine; by host" evidence="1">
    <location>
        <position position="56"/>
    </location>
</feature>
<feature type="glycosylation site" description="N-linked (GlcNAc...) asparagine; by host" evidence="1">
    <location>
        <position position="77"/>
    </location>
</feature>
<feature type="glycosylation site" description="N-linked (GlcNAc...) asparagine; by host" evidence="1">
    <location>
        <position position="96"/>
    </location>
</feature>
<feature type="glycosylation site" description="N-linked (GlcNAc...) asparagine; by host" evidence="1">
    <location>
        <position position="101"/>
    </location>
</feature>
<feature type="glycosylation site" description="N-linked (GlcNAc...) asparagine; by host" evidence="1">
    <location>
        <position position="110"/>
    </location>
</feature>
<feature type="glycosylation site" description="N-linked (GlcNAc...) asparagine; by host" evidence="1">
    <location>
        <position position="127"/>
    </location>
</feature>
<feature type="glycosylation site" description="N-linked (GlcNAc...) asparagine; by host" evidence="1">
    <location>
        <position position="144"/>
    </location>
</feature>
<feature type="glycosylation site" description="N-linked (GlcNAc...) asparagine; by host" evidence="1">
    <location>
        <position position="159"/>
    </location>
</feature>
<organismHost>
    <name type="scientific">Homo sapiens</name>
    <name type="common">Human</name>
    <dbReference type="NCBI Taxonomy" id="9606"/>
</organismHost>
<accession>P03224</accession>
<accession>Q777C5</accession>
<name>BDLF3_EBVB9</name>
<keyword id="KW-0325">Glycoprotein</keyword>
<keyword id="KW-0426">Late protein</keyword>
<keyword id="KW-0472">Membrane</keyword>
<keyword id="KW-1185">Reference proteome</keyword>
<keyword id="KW-0732">Signal</keyword>
<keyword id="KW-0812">Transmembrane</keyword>
<keyword id="KW-1133">Transmembrane helix</keyword>
<sequence length="234" mass="23791">MAHARDKAGAVMAMILICETSLIWTSSGSSTASAGNVTGTTAVTTPSPSASGPSTNQSTTLTTTSAPITTTAILSTNTTTVTFTGTTVTPVPTTSNASTINVTTKVTAQNITATEAGTGTSTGVTSNVTTRSSSTTSATTRITNATTLAPTLSSKGTSNATKTTAELPTVPDERQPSLSYGLPLWTLVFVGLTFLMLILIFAAGLMMSAKNKPLDEALLTNAVTRDPSLYKGLV</sequence>
<dbReference type="EMBL" id="V01555">
    <property type="protein sequence ID" value="CAA24835.1"/>
    <property type="molecule type" value="Genomic_DNA"/>
</dbReference>
<dbReference type="EMBL" id="AJ507799">
    <property type="protein sequence ID" value="CAD53444.1"/>
    <property type="molecule type" value="Genomic_DNA"/>
</dbReference>
<dbReference type="PIR" id="F43044">
    <property type="entry name" value="QQBE43"/>
</dbReference>
<dbReference type="RefSeq" id="YP_401694.1">
    <property type="nucleotide sequence ID" value="NC_007605.1"/>
</dbReference>
<dbReference type="SMR" id="P03224"/>
<dbReference type="IntAct" id="P03224">
    <property type="interactions" value="2"/>
</dbReference>
<dbReference type="MINT" id="P03224"/>
<dbReference type="DNASU" id="3783694"/>
<dbReference type="GeneID" id="3783694"/>
<dbReference type="KEGG" id="vg:3783694"/>
<dbReference type="Proteomes" id="UP000153037">
    <property type="component" value="Segment"/>
</dbReference>
<dbReference type="GO" id="GO:0016020">
    <property type="term" value="C:membrane"/>
    <property type="evidence" value="ECO:0007669"/>
    <property type="project" value="UniProtKB-SubCell"/>
</dbReference>
<protein>
    <recommendedName>
        <fullName>Glycoprotein BDLF3</fullName>
    </recommendedName>
</protein>
<proteinExistence type="evidence at protein level"/>
<evidence type="ECO:0000255" key="1"/>
<evidence type="ECO:0000256" key="2">
    <source>
        <dbReference type="SAM" id="MobiDB-lite"/>
    </source>
</evidence>
<evidence type="ECO:0000305" key="3"/>
<reference key="1">
    <citation type="journal article" date="1984" name="Nature">
        <title>DNA sequence and expression of the B95-8 Epstein-Barr virus genome.</title>
        <authorList>
            <person name="Baer R."/>
            <person name="Bankier A.T."/>
            <person name="Biggin M.D."/>
            <person name="Deininger P.L."/>
            <person name="Farrell P.J."/>
            <person name="Gibson T.J."/>
            <person name="Hatfull G."/>
            <person name="Hudson G.S."/>
            <person name="Satchwell S.C."/>
            <person name="Seguin C."/>
            <person name="Tuffnell P.S."/>
            <person name="Barrell B.G."/>
        </authorList>
    </citation>
    <scope>NUCLEOTIDE SEQUENCE [LARGE SCALE GENOMIC DNA]</scope>
</reference>
<reference key="2">
    <citation type="journal article" date="2003" name="Virology">
        <title>Updated Epstein-Barr virus (EBV) DNA sequence and analysis of a promoter for the BART (CST, BARF0) RNAs of EBV.</title>
        <authorList>
            <person name="de Jesus O."/>
            <person name="Smith P.R."/>
            <person name="Spender L.C."/>
            <person name="Elgueta Karstegl C."/>
            <person name="Niller H.H."/>
            <person name="Huang D."/>
            <person name="Farrell P.J."/>
        </authorList>
    </citation>
    <scope>GENOME REANNOTATION</scope>
</reference>
<reference key="3">
    <citation type="journal article" date="1995" name="J. Gen. Virol.">
        <title>The Epstein-Barr virus open reading frame BDLF3 codes for a 100-150 kDa glycoprotein.</title>
        <authorList>
            <person name="Nolan L.A."/>
            <person name="Morgan A.J."/>
        </authorList>
    </citation>
    <scope>CHARACTERIZATION</scope>
    <scope>GLYCOSYLATION</scope>
</reference>
<organism>
    <name type="scientific">Epstein-Barr virus (strain B95-8)</name>
    <name type="common">HHV-4</name>
    <name type="synonym">Human herpesvirus 4</name>
    <dbReference type="NCBI Taxonomy" id="10377"/>
    <lineage>
        <taxon>Viruses</taxon>
        <taxon>Duplodnaviria</taxon>
        <taxon>Heunggongvirae</taxon>
        <taxon>Peploviricota</taxon>
        <taxon>Herviviricetes</taxon>
        <taxon>Herpesvirales</taxon>
        <taxon>Orthoherpesviridae</taxon>
        <taxon>Gammaherpesvirinae</taxon>
        <taxon>Lymphocryptovirus</taxon>
        <taxon>Lymphocryptovirus humangamma4</taxon>
        <taxon>Epstein-Barr virus (strain GD1)</taxon>
    </lineage>
</organism>